<dbReference type="EC" id="2.7.4.6" evidence="1"/>
<dbReference type="EMBL" id="AP008232">
    <property type="protein sequence ID" value="BAE75039.1"/>
    <property type="molecule type" value="Genomic_DNA"/>
</dbReference>
<dbReference type="RefSeq" id="WP_011411588.1">
    <property type="nucleotide sequence ID" value="NC_007712.1"/>
</dbReference>
<dbReference type="SMR" id="Q2NS36"/>
<dbReference type="STRING" id="343509.SG1764"/>
<dbReference type="KEGG" id="sgl:SG1764"/>
<dbReference type="eggNOG" id="COG0105">
    <property type="taxonomic scope" value="Bacteria"/>
</dbReference>
<dbReference type="HOGENOM" id="CLU_060216_8_1_6"/>
<dbReference type="OrthoDB" id="9801161at2"/>
<dbReference type="BioCyc" id="SGLO343509:SGP1_RS16065-MONOMER"/>
<dbReference type="Proteomes" id="UP000001932">
    <property type="component" value="Chromosome"/>
</dbReference>
<dbReference type="GO" id="GO:0005737">
    <property type="term" value="C:cytoplasm"/>
    <property type="evidence" value="ECO:0007669"/>
    <property type="project" value="UniProtKB-SubCell"/>
</dbReference>
<dbReference type="GO" id="GO:0005524">
    <property type="term" value="F:ATP binding"/>
    <property type="evidence" value="ECO:0007669"/>
    <property type="project" value="UniProtKB-UniRule"/>
</dbReference>
<dbReference type="GO" id="GO:0046872">
    <property type="term" value="F:metal ion binding"/>
    <property type="evidence" value="ECO:0007669"/>
    <property type="project" value="UniProtKB-KW"/>
</dbReference>
<dbReference type="GO" id="GO:0004550">
    <property type="term" value="F:nucleoside diphosphate kinase activity"/>
    <property type="evidence" value="ECO:0007669"/>
    <property type="project" value="UniProtKB-UniRule"/>
</dbReference>
<dbReference type="GO" id="GO:0006241">
    <property type="term" value="P:CTP biosynthetic process"/>
    <property type="evidence" value="ECO:0007669"/>
    <property type="project" value="UniProtKB-UniRule"/>
</dbReference>
<dbReference type="GO" id="GO:0006183">
    <property type="term" value="P:GTP biosynthetic process"/>
    <property type="evidence" value="ECO:0007669"/>
    <property type="project" value="UniProtKB-UniRule"/>
</dbReference>
<dbReference type="GO" id="GO:0006228">
    <property type="term" value="P:UTP biosynthetic process"/>
    <property type="evidence" value="ECO:0007669"/>
    <property type="project" value="UniProtKB-UniRule"/>
</dbReference>
<dbReference type="CDD" id="cd04413">
    <property type="entry name" value="NDPk_I"/>
    <property type="match status" value="1"/>
</dbReference>
<dbReference type="FunFam" id="3.30.70.141:FF:000001">
    <property type="entry name" value="Nucleoside diphosphate kinase"/>
    <property type="match status" value="1"/>
</dbReference>
<dbReference type="Gene3D" id="3.30.70.141">
    <property type="entry name" value="Nucleoside diphosphate kinase-like domain"/>
    <property type="match status" value="1"/>
</dbReference>
<dbReference type="HAMAP" id="MF_00451">
    <property type="entry name" value="NDP_kinase"/>
    <property type="match status" value="1"/>
</dbReference>
<dbReference type="InterPro" id="IPR034907">
    <property type="entry name" value="NDK-like_dom"/>
</dbReference>
<dbReference type="InterPro" id="IPR036850">
    <property type="entry name" value="NDK-like_dom_sf"/>
</dbReference>
<dbReference type="InterPro" id="IPR001564">
    <property type="entry name" value="Nucleoside_diP_kinase"/>
</dbReference>
<dbReference type="NCBIfam" id="NF001908">
    <property type="entry name" value="PRK00668.1"/>
    <property type="match status" value="1"/>
</dbReference>
<dbReference type="PANTHER" id="PTHR46161">
    <property type="entry name" value="NUCLEOSIDE DIPHOSPHATE KINASE"/>
    <property type="match status" value="1"/>
</dbReference>
<dbReference type="PANTHER" id="PTHR46161:SF3">
    <property type="entry name" value="NUCLEOSIDE DIPHOSPHATE KINASE DDB_G0292928-RELATED"/>
    <property type="match status" value="1"/>
</dbReference>
<dbReference type="Pfam" id="PF00334">
    <property type="entry name" value="NDK"/>
    <property type="match status" value="1"/>
</dbReference>
<dbReference type="PRINTS" id="PR01243">
    <property type="entry name" value="NUCDPKINASE"/>
</dbReference>
<dbReference type="SMART" id="SM00562">
    <property type="entry name" value="NDK"/>
    <property type="match status" value="1"/>
</dbReference>
<dbReference type="SUPFAM" id="SSF54919">
    <property type="entry name" value="Nucleoside diphosphate kinase, NDK"/>
    <property type="match status" value="1"/>
</dbReference>
<dbReference type="PROSITE" id="PS51374">
    <property type="entry name" value="NDPK_LIKE"/>
    <property type="match status" value="1"/>
</dbReference>
<feature type="chain" id="PRO_0000242517" description="Nucleoside diphosphate kinase">
    <location>
        <begin position="1"/>
        <end position="143"/>
    </location>
</feature>
<feature type="active site" description="Pros-phosphohistidine intermediate" evidence="1">
    <location>
        <position position="117"/>
    </location>
</feature>
<feature type="binding site" evidence="1">
    <location>
        <position position="11"/>
    </location>
    <ligand>
        <name>ATP</name>
        <dbReference type="ChEBI" id="CHEBI:30616"/>
    </ligand>
</feature>
<feature type="binding site" evidence="1">
    <location>
        <position position="59"/>
    </location>
    <ligand>
        <name>ATP</name>
        <dbReference type="ChEBI" id="CHEBI:30616"/>
    </ligand>
</feature>
<feature type="binding site" evidence="1">
    <location>
        <position position="87"/>
    </location>
    <ligand>
        <name>ATP</name>
        <dbReference type="ChEBI" id="CHEBI:30616"/>
    </ligand>
</feature>
<feature type="binding site" evidence="1">
    <location>
        <position position="93"/>
    </location>
    <ligand>
        <name>ATP</name>
        <dbReference type="ChEBI" id="CHEBI:30616"/>
    </ligand>
</feature>
<feature type="binding site" evidence="1">
    <location>
        <position position="104"/>
    </location>
    <ligand>
        <name>ATP</name>
        <dbReference type="ChEBI" id="CHEBI:30616"/>
    </ligand>
</feature>
<feature type="binding site" evidence="1">
    <location>
        <position position="114"/>
    </location>
    <ligand>
        <name>ATP</name>
        <dbReference type="ChEBI" id="CHEBI:30616"/>
    </ligand>
</feature>
<reference key="1">
    <citation type="journal article" date="2006" name="Genome Res.">
        <title>Massive genome erosion and functional adaptations provide insights into the symbiotic lifestyle of Sodalis glossinidius in the tsetse host.</title>
        <authorList>
            <person name="Toh H."/>
            <person name="Weiss B.L."/>
            <person name="Perkin S.A.H."/>
            <person name="Yamashita A."/>
            <person name="Oshima K."/>
            <person name="Hattori M."/>
            <person name="Aksoy S."/>
        </authorList>
    </citation>
    <scope>NUCLEOTIDE SEQUENCE [LARGE SCALE GENOMIC DNA]</scope>
    <source>
        <strain>morsitans</strain>
    </source>
</reference>
<evidence type="ECO:0000255" key="1">
    <source>
        <dbReference type="HAMAP-Rule" id="MF_00451"/>
    </source>
</evidence>
<comment type="function">
    <text evidence="1">Major role in the synthesis of nucleoside triphosphates other than ATP. The ATP gamma phosphate is transferred to the NDP beta phosphate via a ping-pong mechanism, using a phosphorylated active-site intermediate.</text>
</comment>
<comment type="catalytic activity">
    <reaction evidence="1">
        <text>a 2'-deoxyribonucleoside 5'-diphosphate + ATP = a 2'-deoxyribonucleoside 5'-triphosphate + ADP</text>
        <dbReference type="Rhea" id="RHEA:44640"/>
        <dbReference type="ChEBI" id="CHEBI:30616"/>
        <dbReference type="ChEBI" id="CHEBI:61560"/>
        <dbReference type="ChEBI" id="CHEBI:73316"/>
        <dbReference type="ChEBI" id="CHEBI:456216"/>
        <dbReference type="EC" id="2.7.4.6"/>
    </reaction>
</comment>
<comment type="catalytic activity">
    <reaction evidence="1">
        <text>a ribonucleoside 5'-diphosphate + ATP = a ribonucleoside 5'-triphosphate + ADP</text>
        <dbReference type="Rhea" id="RHEA:18113"/>
        <dbReference type="ChEBI" id="CHEBI:30616"/>
        <dbReference type="ChEBI" id="CHEBI:57930"/>
        <dbReference type="ChEBI" id="CHEBI:61557"/>
        <dbReference type="ChEBI" id="CHEBI:456216"/>
        <dbReference type="EC" id="2.7.4.6"/>
    </reaction>
</comment>
<comment type="cofactor">
    <cofactor evidence="1">
        <name>Mg(2+)</name>
        <dbReference type="ChEBI" id="CHEBI:18420"/>
    </cofactor>
</comment>
<comment type="subunit">
    <text evidence="1">Homotetramer.</text>
</comment>
<comment type="subcellular location">
    <subcellularLocation>
        <location evidence="1">Cytoplasm</location>
    </subcellularLocation>
</comment>
<comment type="similarity">
    <text evidence="1">Belongs to the NDK family.</text>
</comment>
<gene>
    <name evidence="1" type="primary">ndk</name>
    <name type="ordered locus">SG1764</name>
</gene>
<organism>
    <name type="scientific">Sodalis glossinidius (strain morsitans)</name>
    <dbReference type="NCBI Taxonomy" id="343509"/>
    <lineage>
        <taxon>Bacteria</taxon>
        <taxon>Pseudomonadati</taxon>
        <taxon>Pseudomonadota</taxon>
        <taxon>Gammaproteobacteria</taxon>
        <taxon>Enterobacterales</taxon>
        <taxon>Bruguierivoracaceae</taxon>
        <taxon>Sodalis</taxon>
    </lineage>
</organism>
<name>NDK_SODGM</name>
<protein>
    <recommendedName>
        <fullName evidence="1">Nucleoside diphosphate kinase</fullName>
        <shortName evidence="1">NDK</shortName>
        <shortName evidence="1">NDP kinase</shortName>
        <ecNumber evidence="1">2.7.4.6</ecNumber>
    </recommendedName>
    <alternativeName>
        <fullName evidence="1">Nucleoside-2-P kinase</fullName>
    </alternativeName>
</protein>
<proteinExistence type="inferred from homology"/>
<accession>Q2NS36</accession>
<sequence length="143" mass="15620">MTIERTFSIIKPNAVAKNVIGAIIQRFESTGLTVVGAKMLQLTREQAEGFYAEHKGKPFFDSLVDFMISGPILVQVLEGEDAVRRNREIMGATNLANALAGTLRADYADSFTENAVHGSDSAESAAREIAYFFADGEVCTRIR</sequence>
<keyword id="KW-0067">ATP-binding</keyword>
<keyword id="KW-0963">Cytoplasm</keyword>
<keyword id="KW-0418">Kinase</keyword>
<keyword id="KW-0460">Magnesium</keyword>
<keyword id="KW-0479">Metal-binding</keyword>
<keyword id="KW-0546">Nucleotide metabolism</keyword>
<keyword id="KW-0547">Nucleotide-binding</keyword>
<keyword id="KW-0597">Phosphoprotein</keyword>
<keyword id="KW-0808">Transferase</keyword>